<name>EI22_LITRU</name>
<evidence type="ECO:0000269" key="1">
    <source ref="1"/>
</evidence>
<protein>
    <recommendedName>
        <fullName>Electrin-2.2</fullName>
    </recommendedName>
</protein>
<organism>
    <name type="scientific">Litoria rubella</name>
    <name type="common">Desert tree frog</name>
    <name type="synonym">Hyla rubella</name>
    <dbReference type="NCBI Taxonomy" id="104895"/>
    <lineage>
        <taxon>Eukaryota</taxon>
        <taxon>Metazoa</taxon>
        <taxon>Chordata</taxon>
        <taxon>Craniata</taxon>
        <taxon>Vertebrata</taxon>
        <taxon>Euteleostomi</taxon>
        <taxon>Amphibia</taxon>
        <taxon>Batrachia</taxon>
        <taxon>Anura</taxon>
        <taxon>Neobatrachia</taxon>
        <taxon>Hyloidea</taxon>
        <taxon>Hylidae</taxon>
        <taxon>Pelodryadinae</taxon>
        <taxon>Litoria</taxon>
    </lineage>
</organism>
<comment type="subcellular location">
    <subcellularLocation>
        <location>Secreted</location>
    </subcellularLocation>
</comment>
<comment type="tissue specificity">
    <text>Expressed by the skin glands.</text>
</comment>
<sequence>NEEEKVKWQPDVP</sequence>
<feature type="peptide" id="PRO_0000043793" description="Electrin-2.2">
    <location>
        <begin position="1"/>
        <end position="13"/>
    </location>
</feature>
<feature type="modified residue" description="Proline amide" evidence="1">
    <location>
        <position position="13"/>
    </location>
</feature>
<dbReference type="GO" id="GO:0005576">
    <property type="term" value="C:extracellular region"/>
    <property type="evidence" value="ECO:0007669"/>
    <property type="project" value="UniProtKB-SubCell"/>
</dbReference>
<dbReference type="GO" id="GO:0006952">
    <property type="term" value="P:defense response"/>
    <property type="evidence" value="ECO:0007669"/>
    <property type="project" value="UniProtKB-KW"/>
</dbReference>
<keyword id="KW-0027">Amidation</keyword>
<keyword id="KW-0878">Amphibian defense peptide</keyword>
<keyword id="KW-0903">Direct protein sequencing</keyword>
<keyword id="KW-0964">Secreted</keyword>
<accession>P82098</accession>
<reference key="1">
    <citation type="journal article" date="1999" name="Aust. J. Chem.">
        <title>Peptides from the skin glands of the Australian buzzing tree frog Litori electrica. Comparison with the skin peptides from Litoria rubella.</title>
        <authorList>
            <person name="Wabnitz P.A."/>
            <person name="Bowie J.H."/>
            <person name="Tyler M.J."/>
            <person name="Wallace J.C."/>
        </authorList>
    </citation>
    <scope>PROTEIN SEQUENCE</scope>
    <scope>AMIDATION AT PRO-13</scope>
    <source>
        <tissue>Skin secretion</tissue>
    </source>
</reference>
<proteinExistence type="evidence at protein level"/>